<gene>
    <name evidence="1" type="primary">kdsB</name>
    <name type="ordered locus">FTF1478c</name>
</gene>
<comment type="function">
    <text evidence="1">Activates KDO (a required 8-carbon sugar) for incorporation into bacterial lipopolysaccharide in Gram-negative bacteria.</text>
</comment>
<comment type="catalytic activity">
    <reaction evidence="1">
        <text>3-deoxy-alpha-D-manno-oct-2-ulosonate + CTP = CMP-3-deoxy-beta-D-manno-octulosonate + diphosphate</text>
        <dbReference type="Rhea" id="RHEA:23448"/>
        <dbReference type="ChEBI" id="CHEBI:33019"/>
        <dbReference type="ChEBI" id="CHEBI:37563"/>
        <dbReference type="ChEBI" id="CHEBI:85986"/>
        <dbReference type="ChEBI" id="CHEBI:85987"/>
        <dbReference type="EC" id="2.7.7.38"/>
    </reaction>
</comment>
<comment type="pathway">
    <text evidence="1">Nucleotide-sugar biosynthesis; CMP-3-deoxy-D-manno-octulosonate biosynthesis; CMP-3-deoxy-D-manno-octulosonate from 3-deoxy-D-manno-octulosonate and CTP: step 1/1.</text>
</comment>
<comment type="pathway">
    <text evidence="1">Bacterial outer membrane biogenesis; lipopolysaccharide biosynthesis.</text>
</comment>
<comment type="subcellular location">
    <subcellularLocation>
        <location evidence="1">Cytoplasm</location>
    </subcellularLocation>
</comment>
<comment type="similarity">
    <text evidence="1">Belongs to the KdsB family.</text>
</comment>
<organism>
    <name type="scientific">Francisella tularensis subsp. tularensis (strain FSC 198)</name>
    <dbReference type="NCBI Taxonomy" id="393115"/>
    <lineage>
        <taxon>Bacteria</taxon>
        <taxon>Pseudomonadati</taxon>
        <taxon>Pseudomonadota</taxon>
        <taxon>Gammaproteobacteria</taxon>
        <taxon>Thiotrichales</taxon>
        <taxon>Francisellaceae</taxon>
        <taxon>Francisella</taxon>
    </lineage>
</organism>
<dbReference type="EC" id="2.7.7.38" evidence="1"/>
<dbReference type="EMBL" id="AM286280">
    <property type="protein sequence ID" value="CAL09494.1"/>
    <property type="molecule type" value="Genomic_DNA"/>
</dbReference>
<dbReference type="RefSeq" id="WP_003022333.1">
    <property type="nucleotide sequence ID" value="NC_008245.1"/>
</dbReference>
<dbReference type="SMR" id="Q14GD1"/>
<dbReference type="KEGG" id="ftf:FTF1478c"/>
<dbReference type="HOGENOM" id="CLU_065038_1_0_6"/>
<dbReference type="UniPathway" id="UPA00030"/>
<dbReference type="UniPathway" id="UPA00358">
    <property type="reaction ID" value="UER00476"/>
</dbReference>
<dbReference type="GO" id="GO:0005829">
    <property type="term" value="C:cytosol"/>
    <property type="evidence" value="ECO:0007669"/>
    <property type="project" value="TreeGrafter"/>
</dbReference>
<dbReference type="GO" id="GO:0008690">
    <property type="term" value="F:3-deoxy-manno-octulosonate cytidylyltransferase activity"/>
    <property type="evidence" value="ECO:0007669"/>
    <property type="project" value="UniProtKB-UniRule"/>
</dbReference>
<dbReference type="GO" id="GO:0033468">
    <property type="term" value="P:CMP-keto-3-deoxy-D-manno-octulosonic acid biosynthetic process"/>
    <property type="evidence" value="ECO:0007669"/>
    <property type="project" value="UniProtKB-UniRule"/>
</dbReference>
<dbReference type="GO" id="GO:0009103">
    <property type="term" value="P:lipopolysaccharide biosynthetic process"/>
    <property type="evidence" value="ECO:0007669"/>
    <property type="project" value="UniProtKB-UniRule"/>
</dbReference>
<dbReference type="CDD" id="cd02517">
    <property type="entry name" value="CMP-KDO-Synthetase"/>
    <property type="match status" value="1"/>
</dbReference>
<dbReference type="FunFam" id="3.90.550.10:FF:000011">
    <property type="entry name" value="3-deoxy-manno-octulosonate cytidylyltransferase"/>
    <property type="match status" value="1"/>
</dbReference>
<dbReference type="Gene3D" id="3.90.550.10">
    <property type="entry name" value="Spore Coat Polysaccharide Biosynthesis Protein SpsA, Chain A"/>
    <property type="match status" value="1"/>
</dbReference>
<dbReference type="HAMAP" id="MF_00057">
    <property type="entry name" value="KdsB"/>
    <property type="match status" value="1"/>
</dbReference>
<dbReference type="InterPro" id="IPR003329">
    <property type="entry name" value="Cytidylyl_trans"/>
</dbReference>
<dbReference type="InterPro" id="IPR004528">
    <property type="entry name" value="KdsB"/>
</dbReference>
<dbReference type="InterPro" id="IPR029044">
    <property type="entry name" value="Nucleotide-diphossugar_trans"/>
</dbReference>
<dbReference type="NCBIfam" id="TIGR00466">
    <property type="entry name" value="kdsB"/>
    <property type="match status" value="1"/>
</dbReference>
<dbReference type="NCBIfam" id="NF003950">
    <property type="entry name" value="PRK05450.1-3"/>
    <property type="match status" value="1"/>
</dbReference>
<dbReference type="NCBIfam" id="NF003952">
    <property type="entry name" value="PRK05450.1-5"/>
    <property type="match status" value="1"/>
</dbReference>
<dbReference type="NCBIfam" id="NF009905">
    <property type="entry name" value="PRK13368.1"/>
    <property type="match status" value="1"/>
</dbReference>
<dbReference type="PANTHER" id="PTHR42866">
    <property type="entry name" value="3-DEOXY-MANNO-OCTULOSONATE CYTIDYLYLTRANSFERASE"/>
    <property type="match status" value="1"/>
</dbReference>
<dbReference type="PANTHER" id="PTHR42866:SF2">
    <property type="entry name" value="3-DEOXY-MANNO-OCTULOSONATE CYTIDYLYLTRANSFERASE, MITOCHONDRIAL"/>
    <property type="match status" value="1"/>
</dbReference>
<dbReference type="Pfam" id="PF02348">
    <property type="entry name" value="CTP_transf_3"/>
    <property type="match status" value="1"/>
</dbReference>
<dbReference type="SUPFAM" id="SSF53448">
    <property type="entry name" value="Nucleotide-diphospho-sugar transferases"/>
    <property type="match status" value="1"/>
</dbReference>
<evidence type="ECO:0000255" key="1">
    <source>
        <dbReference type="HAMAP-Rule" id="MF_00057"/>
    </source>
</evidence>
<feature type="chain" id="PRO_0000370072" description="3-deoxy-manno-octulosonate cytidylyltransferase">
    <location>
        <begin position="1"/>
        <end position="250"/>
    </location>
</feature>
<sequence length="250" mass="28199">MANIHIVIPARLKSTRLPNKMLADIAGKPMIQRVYEQVTKSKFDSIIIATDSQKIKDIAKSFGAKVVLTRDDHQSGTDRIAEAVTKLGFADEDIVVNVQGDEPLIPIENIEQAAQLLIDKSEAVVSTLCEKITDVEDIYNPNNVKVVFDKNNYALYFSRASIPFERGFSEKEQINISEFFRHIGIYAYRVAFLKHYAELTVSPIEKYEALEQLKVLYNGYKIAIEQSAKSTPAGVDTLQDLEKVRKLFNV</sequence>
<keyword id="KW-0963">Cytoplasm</keyword>
<keyword id="KW-0448">Lipopolysaccharide biosynthesis</keyword>
<keyword id="KW-0548">Nucleotidyltransferase</keyword>
<keyword id="KW-0808">Transferase</keyword>
<accession>Q14GD1</accession>
<proteinExistence type="inferred from homology"/>
<reference key="1">
    <citation type="journal article" date="2007" name="PLoS ONE">
        <title>Genome sequencing shows that European isolates of Francisella tularensis subspecies tularensis are almost identical to US laboratory strain Schu S4.</title>
        <authorList>
            <person name="Chaudhuri R.R."/>
            <person name="Ren C.-P."/>
            <person name="Desmond L."/>
            <person name="Vincent G.A."/>
            <person name="Silman N.J."/>
            <person name="Brehm J.K."/>
            <person name="Elmore M.J."/>
            <person name="Hudson M.J."/>
            <person name="Forsman M."/>
            <person name="Isherwood K.E."/>
            <person name="Gurycova D."/>
            <person name="Minton N.P."/>
            <person name="Titball R.W."/>
            <person name="Pallen M.J."/>
            <person name="Vipond R."/>
        </authorList>
    </citation>
    <scope>NUCLEOTIDE SEQUENCE [LARGE SCALE GENOMIC DNA]</scope>
    <source>
        <strain>FSC 198</strain>
    </source>
</reference>
<protein>
    <recommendedName>
        <fullName evidence="1">3-deoxy-manno-octulosonate cytidylyltransferase</fullName>
        <ecNumber evidence="1">2.7.7.38</ecNumber>
    </recommendedName>
    <alternativeName>
        <fullName evidence="1">CMP-2-keto-3-deoxyoctulosonic acid synthase</fullName>
        <shortName evidence="1">CKS</shortName>
        <shortName evidence="1">CMP-KDO synthase</shortName>
    </alternativeName>
</protein>
<name>KDSB_FRAT1</name>